<reference key="1">
    <citation type="journal article" date="2000" name="Nature">
        <title>Sequence and analysis of chromosome 5 of the plant Arabidopsis thaliana.</title>
        <authorList>
            <person name="Tabata S."/>
            <person name="Kaneko T."/>
            <person name="Nakamura Y."/>
            <person name="Kotani H."/>
            <person name="Kato T."/>
            <person name="Asamizu E."/>
            <person name="Miyajima N."/>
            <person name="Sasamoto S."/>
            <person name="Kimura T."/>
            <person name="Hosouchi T."/>
            <person name="Kawashima K."/>
            <person name="Kohara M."/>
            <person name="Matsumoto M."/>
            <person name="Matsuno A."/>
            <person name="Muraki A."/>
            <person name="Nakayama S."/>
            <person name="Nakazaki N."/>
            <person name="Naruo K."/>
            <person name="Okumura S."/>
            <person name="Shinpo S."/>
            <person name="Takeuchi C."/>
            <person name="Wada T."/>
            <person name="Watanabe A."/>
            <person name="Yamada M."/>
            <person name="Yasuda M."/>
            <person name="Sato S."/>
            <person name="de la Bastide M."/>
            <person name="Huang E."/>
            <person name="Spiegel L."/>
            <person name="Gnoj L."/>
            <person name="O'Shaughnessy A."/>
            <person name="Preston R."/>
            <person name="Habermann K."/>
            <person name="Murray J."/>
            <person name="Johnson D."/>
            <person name="Rohlfing T."/>
            <person name="Nelson J."/>
            <person name="Stoneking T."/>
            <person name="Pepin K."/>
            <person name="Spieth J."/>
            <person name="Sekhon M."/>
            <person name="Armstrong J."/>
            <person name="Becker M."/>
            <person name="Belter E."/>
            <person name="Cordum H."/>
            <person name="Cordes M."/>
            <person name="Courtney L."/>
            <person name="Courtney W."/>
            <person name="Dante M."/>
            <person name="Du H."/>
            <person name="Edwards J."/>
            <person name="Fryman J."/>
            <person name="Haakensen B."/>
            <person name="Lamar E."/>
            <person name="Latreille P."/>
            <person name="Leonard S."/>
            <person name="Meyer R."/>
            <person name="Mulvaney E."/>
            <person name="Ozersky P."/>
            <person name="Riley A."/>
            <person name="Strowmatt C."/>
            <person name="Wagner-McPherson C."/>
            <person name="Wollam A."/>
            <person name="Yoakum M."/>
            <person name="Bell M."/>
            <person name="Dedhia N."/>
            <person name="Parnell L."/>
            <person name="Shah R."/>
            <person name="Rodriguez M."/>
            <person name="Hoon See L."/>
            <person name="Vil D."/>
            <person name="Baker J."/>
            <person name="Kirchoff K."/>
            <person name="Toth K."/>
            <person name="King L."/>
            <person name="Bahret A."/>
            <person name="Miller B."/>
            <person name="Marra M.A."/>
            <person name="Martienssen R."/>
            <person name="McCombie W.R."/>
            <person name="Wilson R.K."/>
            <person name="Murphy G."/>
            <person name="Bancroft I."/>
            <person name="Volckaert G."/>
            <person name="Wambutt R."/>
            <person name="Duesterhoeft A."/>
            <person name="Stiekema W."/>
            <person name="Pohl T."/>
            <person name="Entian K.-D."/>
            <person name="Terryn N."/>
            <person name="Hartley N."/>
            <person name="Bent E."/>
            <person name="Johnson S."/>
            <person name="Langham S.-A."/>
            <person name="McCullagh B."/>
            <person name="Robben J."/>
            <person name="Grymonprez B."/>
            <person name="Zimmermann W."/>
            <person name="Ramsperger U."/>
            <person name="Wedler H."/>
            <person name="Balke K."/>
            <person name="Wedler E."/>
            <person name="Peters S."/>
            <person name="van Staveren M."/>
            <person name="Dirkse W."/>
            <person name="Mooijman P."/>
            <person name="Klein Lankhorst R."/>
            <person name="Weitzenegger T."/>
            <person name="Bothe G."/>
            <person name="Rose M."/>
            <person name="Hauf J."/>
            <person name="Berneiser S."/>
            <person name="Hempel S."/>
            <person name="Feldpausch M."/>
            <person name="Lamberth S."/>
            <person name="Villarroel R."/>
            <person name="Gielen J."/>
            <person name="Ardiles W."/>
            <person name="Bents O."/>
            <person name="Lemcke K."/>
            <person name="Kolesov G."/>
            <person name="Mayer K.F.X."/>
            <person name="Rudd S."/>
            <person name="Schoof H."/>
            <person name="Schueller C."/>
            <person name="Zaccaria P."/>
            <person name="Mewes H.-W."/>
            <person name="Bevan M."/>
            <person name="Fransz P.F."/>
        </authorList>
    </citation>
    <scope>NUCLEOTIDE SEQUENCE [LARGE SCALE GENOMIC DNA]</scope>
    <source>
        <strain>cv. Columbia</strain>
    </source>
</reference>
<reference key="2">
    <citation type="journal article" date="2017" name="Plant J.">
        <title>Araport11: a complete reannotation of the Arabidopsis thaliana reference genome.</title>
        <authorList>
            <person name="Cheng C.Y."/>
            <person name="Krishnakumar V."/>
            <person name="Chan A.P."/>
            <person name="Thibaud-Nissen F."/>
            <person name="Schobel S."/>
            <person name="Town C.D."/>
        </authorList>
    </citation>
    <scope>GENOME REANNOTATION</scope>
    <source>
        <strain>cv. Columbia</strain>
    </source>
</reference>
<reference key="3">
    <citation type="submission" date="2006-07" db="EMBL/GenBank/DDBJ databases">
        <title>Large-scale analysis of RIKEN Arabidopsis full-length (RAFL) cDNAs.</title>
        <authorList>
            <person name="Totoki Y."/>
            <person name="Seki M."/>
            <person name="Ishida J."/>
            <person name="Nakajima M."/>
            <person name="Enju A."/>
            <person name="Kamiya A."/>
            <person name="Narusaka M."/>
            <person name="Shin-i T."/>
            <person name="Nakagawa M."/>
            <person name="Sakamoto N."/>
            <person name="Oishi K."/>
            <person name="Kohara Y."/>
            <person name="Kobayashi M."/>
            <person name="Toyoda A."/>
            <person name="Sakaki Y."/>
            <person name="Sakurai T."/>
            <person name="Iida K."/>
            <person name="Akiyama K."/>
            <person name="Satou M."/>
            <person name="Toyoda T."/>
            <person name="Konagaya A."/>
            <person name="Carninci P."/>
            <person name="Kawai J."/>
            <person name="Hayashizaki Y."/>
            <person name="Shinozaki K."/>
        </authorList>
    </citation>
    <scope>NUCLEOTIDE SEQUENCE [LARGE SCALE MRNA]</scope>
    <source>
        <strain>cv. Columbia</strain>
    </source>
</reference>
<reference key="4">
    <citation type="journal article" date="2004" name="Plant Cell">
        <title>Genome-wide analysis of Arabidopsis pentatricopeptide repeat proteins reveals their essential role in organelle biogenesis.</title>
        <authorList>
            <person name="Lurin C."/>
            <person name="Andres C."/>
            <person name="Aubourg S."/>
            <person name="Bellaoui M."/>
            <person name="Bitton F."/>
            <person name="Bruyere C."/>
            <person name="Caboche M."/>
            <person name="Debast C."/>
            <person name="Gualberto J."/>
            <person name="Hoffmann B."/>
            <person name="Lecharny A."/>
            <person name="Le Ret M."/>
            <person name="Martin-Magniette M.-L."/>
            <person name="Mireau H."/>
            <person name="Peeters N."/>
            <person name="Renou J.-P."/>
            <person name="Szurek B."/>
            <person name="Taconnat L."/>
            <person name="Small I."/>
        </authorList>
    </citation>
    <scope>GENE FAMILY</scope>
</reference>
<dbReference type="EMBL" id="AC069328">
    <property type="status" value="NOT_ANNOTATED_CDS"/>
    <property type="molecule type" value="Genomic_DNA"/>
</dbReference>
<dbReference type="EMBL" id="CP002688">
    <property type="protein sequence ID" value="AED92568.1"/>
    <property type="molecule type" value="Genomic_DNA"/>
</dbReference>
<dbReference type="EMBL" id="AK228588">
    <property type="protein sequence ID" value="BAF00503.1"/>
    <property type="molecule type" value="mRNA"/>
</dbReference>
<dbReference type="RefSeq" id="NP_974803.1">
    <property type="nucleotide sequence ID" value="NM_203074.4"/>
</dbReference>
<dbReference type="SMR" id="Q3E9F0"/>
<dbReference type="PaxDb" id="3702-AT5G18475.1"/>
<dbReference type="ProteomicsDB" id="249273"/>
<dbReference type="EnsemblPlants" id="AT5G18475.1">
    <property type="protein sequence ID" value="AT5G18475.1"/>
    <property type="gene ID" value="AT5G18475"/>
</dbReference>
<dbReference type="GeneID" id="2745987"/>
<dbReference type="Gramene" id="AT5G18475.1">
    <property type="protein sequence ID" value="AT5G18475.1"/>
    <property type="gene ID" value="AT5G18475"/>
</dbReference>
<dbReference type="KEGG" id="ath:AT5G18475"/>
<dbReference type="Araport" id="AT5G18475"/>
<dbReference type="TAIR" id="AT5G18475"/>
<dbReference type="eggNOG" id="KOG4197">
    <property type="taxonomic scope" value="Eukaryota"/>
</dbReference>
<dbReference type="HOGENOM" id="CLU_002706_49_0_1"/>
<dbReference type="InParanoid" id="Q3E9F0"/>
<dbReference type="OMA" id="ASEPCRF"/>
<dbReference type="OrthoDB" id="185373at2759"/>
<dbReference type="PhylomeDB" id="Q3E9F0"/>
<dbReference type="PRO" id="PR:Q3E9F0"/>
<dbReference type="Proteomes" id="UP000006548">
    <property type="component" value="Chromosome 5"/>
</dbReference>
<dbReference type="ExpressionAtlas" id="Q3E9F0">
    <property type="expression patterns" value="baseline and differential"/>
</dbReference>
<dbReference type="Gene3D" id="1.25.40.10">
    <property type="entry name" value="Tetratricopeptide repeat domain"/>
    <property type="match status" value="5"/>
</dbReference>
<dbReference type="InterPro" id="IPR002885">
    <property type="entry name" value="Pentatricopeptide_rpt"/>
</dbReference>
<dbReference type="InterPro" id="IPR050872">
    <property type="entry name" value="PPR_P_subfamily"/>
</dbReference>
<dbReference type="InterPro" id="IPR011990">
    <property type="entry name" value="TPR-like_helical_dom_sf"/>
</dbReference>
<dbReference type="NCBIfam" id="TIGR00756">
    <property type="entry name" value="PPR"/>
    <property type="match status" value="7"/>
</dbReference>
<dbReference type="PANTHER" id="PTHR46128">
    <property type="entry name" value="MITOCHONDRIAL GROUP I INTRON SPLICING FACTOR CCM1"/>
    <property type="match status" value="1"/>
</dbReference>
<dbReference type="PANTHER" id="PTHR46128:SF266">
    <property type="entry name" value="PENTACOTRIPEPTIDE-REPEAT REGION OF PRORP DOMAIN-CONTAINING PROTEIN"/>
    <property type="match status" value="1"/>
</dbReference>
<dbReference type="Pfam" id="PF12854">
    <property type="entry name" value="PPR_1"/>
    <property type="match status" value="1"/>
</dbReference>
<dbReference type="Pfam" id="PF13041">
    <property type="entry name" value="PPR_2"/>
    <property type="match status" value="3"/>
</dbReference>
<dbReference type="PROSITE" id="PS51375">
    <property type="entry name" value="PPR"/>
    <property type="match status" value="10"/>
</dbReference>
<protein>
    <recommendedName>
        <fullName>Pentatricopeptide repeat-containing protein At5g18475</fullName>
    </recommendedName>
</protein>
<name>PP392_ARATH</name>
<organism>
    <name type="scientific">Arabidopsis thaliana</name>
    <name type="common">Mouse-ear cress</name>
    <dbReference type="NCBI Taxonomy" id="3702"/>
    <lineage>
        <taxon>Eukaryota</taxon>
        <taxon>Viridiplantae</taxon>
        <taxon>Streptophyta</taxon>
        <taxon>Embryophyta</taxon>
        <taxon>Tracheophyta</taxon>
        <taxon>Spermatophyta</taxon>
        <taxon>Magnoliopsida</taxon>
        <taxon>eudicotyledons</taxon>
        <taxon>Gunneridae</taxon>
        <taxon>Pentapetalae</taxon>
        <taxon>rosids</taxon>
        <taxon>malvids</taxon>
        <taxon>Brassicales</taxon>
        <taxon>Brassicaceae</taxon>
        <taxon>Camelineae</taxon>
        <taxon>Arabidopsis</taxon>
    </lineage>
</organism>
<sequence>MRFTTSIINEHRRFSSSSRSWVSPICFSEKKKKPSPPPESSISPVETNPKTKFISHESAVSLMKRERDPQGVLDIFNKASQQKGFNHNNATYSVLLDNLVRHKKFLAVDAILHQMKYETCRFQESLFLNLMRHFSRSDLHDKVMEMFNLIQVIARVKPSLNAISTCLNLLIDSGEVNLSRKLLLYAKHNLGLQPNTCIFNILVKHHCKNGDINFAFLVVEEMKRSGISYPNSITYSTLMDCLFAHSRSKEAVELFEDMISKEGISPDPVTFNVMINGFCRAGEVERAKKILDFMKKNGCNPNVYNYSALMNGFCKVGKIQEAKQTFDEVKKTGLKLDTVGYTTLMNCFCRNGETDEAMKLLGEMKASRCRADTLTYNVILRGLSSEGRSEEALQMLDQWGSEGVHLNKGSYRIILNALCCNGELEKAVKFLSVMSERGIWPHHATWNELVVRLCESGYTEIGVRVLIGFLRIGLIPGPKSWGAVVESICKERKLVHVFELLDSLVS</sequence>
<gene>
    <name type="ordered locus">At5g18475</name>
    <name type="ORF">F20L16.2</name>
</gene>
<proteinExistence type="evidence at transcript level"/>
<accession>Q3E9F0</accession>
<comment type="similarity">
    <text evidence="2">Belongs to the PPR family. P subfamily.</text>
</comment>
<comment type="online information" name="Pentatricopeptide repeat proteins">
    <link uri="https://ppr.plantenergy.uwa.edu.au"/>
</comment>
<feature type="chain" id="PRO_0000363529" description="Pentatricopeptide repeat-containing protein At5g18475">
    <location>
        <begin position="1"/>
        <end position="506"/>
    </location>
</feature>
<feature type="repeat" description="PPR 1">
    <location>
        <begin position="88"/>
        <end position="122"/>
    </location>
</feature>
<feature type="repeat" description="PPR 2">
    <location>
        <begin position="123"/>
        <end position="158"/>
    </location>
</feature>
<feature type="repeat" description="PPR 3">
    <location>
        <begin position="159"/>
        <end position="194"/>
    </location>
</feature>
<feature type="repeat" description="PPR 4">
    <location>
        <begin position="195"/>
        <end position="229"/>
    </location>
</feature>
<feature type="repeat" description="PPR 5">
    <location>
        <begin position="231"/>
        <end position="266"/>
    </location>
</feature>
<feature type="repeat" description="PPR 6">
    <location>
        <begin position="267"/>
        <end position="301"/>
    </location>
</feature>
<feature type="repeat" description="PPR 7">
    <location>
        <begin position="302"/>
        <end position="336"/>
    </location>
</feature>
<feature type="repeat" description="PPR 8">
    <location>
        <begin position="337"/>
        <end position="371"/>
    </location>
</feature>
<feature type="repeat" description="PPR 9">
    <location>
        <begin position="372"/>
        <end position="406"/>
    </location>
</feature>
<feature type="repeat" description="PPR 10">
    <location>
        <begin position="407"/>
        <end position="441"/>
    </location>
</feature>
<feature type="repeat" description="PPR 11">
    <location>
        <begin position="442"/>
        <end position="476"/>
    </location>
</feature>
<feature type="repeat" description="PPR 12">
    <location>
        <begin position="477"/>
        <end position="506"/>
    </location>
</feature>
<feature type="region of interest" description="Disordered" evidence="1">
    <location>
        <begin position="28"/>
        <end position="48"/>
    </location>
</feature>
<keyword id="KW-1185">Reference proteome</keyword>
<keyword id="KW-0677">Repeat</keyword>
<evidence type="ECO:0000256" key="1">
    <source>
        <dbReference type="SAM" id="MobiDB-lite"/>
    </source>
</evidence>
<evidence type="ECO:0000305" key="2"/>